<accession>Q5JG26</accession>
<proteinExistence type="inferred from homology"/>
<organism>
    <name type="scientific">Thermococcus kodakarensis (strain ATCC BAA-918 / JCM 12380 / KOD1)</name>
    <name type="common">Pyrococcus kodakaraensis (strain KOD1)</name>
    <dbReference type="NCBI Taxonomy" id="69014"/>
    <lineage>
        <taxon>Archaea</taxon>
        <taxon>Methanobacteriati</taxon>
        <taxon>Methanobacteriota</taxon>
        <taxon>Thermococci</taxon>
        <taxon>Thermococcales</taxon>
        <taxon>Thermococcaceae</taxon>
        <taxon>Thermococcus</taxon>
    </lineage>
</organism>
<comment type="function">
    <text evidence="1">Broad-specificity nucleoside monophosphate (NMP) kinase that catalyzes the reversible transfer of the terminal phosphate group between nucleoside triphosphates and monophosphates. Also has ATPase activity. Involved in the late maturation steps of the 30S ribosomal particles, specifically 16S rRNA maturation. While NMP activity is not required for ribosome maturation, ATPase activity is. Associates transiently with small ribosomal subunit protein uS11. ATP hydrolysis breaks the interaction with uS11. May temporarily remove uS11 from the ribosome to enable a conformational change of the ribosomal RNA that is needed for the final maturation step of the small ribosomal subunit.</text>
</comment>
<comment type="catalytic activity">
    <reaction evidence="1">
        <text>AMP + ATP = 2 ADP</text>
        <dbReference type="Rhea" id="RHEA:12973"/>
        <dbReference type="ChEBI" id="CHEBI:30616"/>
        <dbReference type="ChEBI" id="CHEBI:456215"/>
        <dbReference type="ChEBI" id="CHEBI:456216"/>
        <dbReference type="EC" id="2.7.4.3"/>
    </reaction>
</comment>
<comment type="catalytic activity">
    <reaction evidence="1">
        <text>ATP + H2O = ADP + phosphate + H(+)</text>
        <dbReference type="Rhea" id="RHEA:13065"/>
        <dbReference type="ChEBI" id="CHEBI:15377"/>
        <dbReference type="ChEBI" id="CHEBI:15378"/>
        <dbReference type="ChEBI" id="CHEBI:30616"/>
        <dbReference type="ChEBI" id="CHEBI:43474"/>
        <dbReference type="ChEBI" id="CHEBI:456216"/>
    </reaction>
</comment>
<comment type="subunit">
    <text evidence="1">Interacts with uS11. Not a structural component of 40S pre-ribosomes, but transiently interacts with them by binding to uS11.</text>
</comment>
<comment type="similarity">
    <text evidence="1">Belongs to the adenylate kinase family. AK6 subfamily.</text>
</comment>
<name>KAD6_THEKO</name>
<evidence type="ECO:0000255" key="1">
    <source>
        <dbReference type="HAMAP-Rule" id="MF_00039"/>
    </source>
</evidence>
<reference key="1">
    <citation type="journal article" date="2005" name="Genome Res.">
        <title>Complete genome sequence of the hyperthermophilic archaeon Thermococcus kodakaraensis KOD1 and comparison with Pyrococcus genomes.</title>
        <authorList>
            <person name="Fukui T."/>
            <person name="Atomi H."/>
            <person name="Kanai T."/>
            <person name="Matsumi R."/>
            <person name="Fujiwara S."/>
            <person name="Imanaka T."/>
        </authorList>
    </citation>
    <scope>NUCLEOTIDE SEQUENCE [LARGE SCALE GENOMIC DNA]</scope>
    <source>
        <strain>ATCC BAA-918 / JCM 12380 / KOD1</strain>
    </source>
</reference>
<sequence>MIIAVTGTPGVGKTTISKLLAEKLGYEYVNLRDYALEKGIGEMKENELEIDVDELREAFGRDFKGKNVVADGHLSHFLKADLVIVLRANPKLIAERLKERGYGREKLGENVEAELVDVILVEALEENENVIEVDTTGKTPEEVVEEILNLIRRGVKRRVGIVDWSEVYDEVLPYLRL</sequence>
<protein>
    <recommendedName>
        <fullName evidence="1">Putative adenylate kinase</fullName>
        <shortName evidence="1">AK</shortName>
        <ecNumber evidence="1">2.7.4.3</ecNumber>
    </recommendedName>
    <alternativeName>
        <fullName evidence="1">ATP-AMP transphosphorylase</fullName>
    </alternativeName>
</protein>
<feature type="chain" id="PRO_0000153914" description="Putative adenylate kinase">
    <location>
        <begin position="1"/>
        <end position="177"/>
    </location>
</feature>
<feature type="region of interest" description="NMP" evidence="1">
    <location>
        <begin position="30"/>
        <end position="50"/>
    </location>
</feature>
<feature type="region of interest" description="LID" evidence="1">
    <location>
        <begin position="99"/>
        <end position="109"/>
    </location>
</feature>
<feature type="binding site" evidence="1">
    <location>
        <position position="10"/>
    </location>
    <ligand>
        <name>ATP</name>
        <dbReference type="ChEBI" id="CHEBI:30616"/>
    </ligand>
</feature>
<feature type="binding site" evidence="1">
    <location>
        <position position="12"/>
    </location>
    <ligand>
        <name>ATP</name>
        <dbReference type="ChEBI" id="CHEBI:30616"/>
    </ligand>
</feature>
<feature type="binding site" evidence="1">
    <location>
        <position position="13"/>
    </location>
    <ligand>
        <name>ATP</name>
        <dbReference type="ChEBI" id="CHEBI:30616"/>
    </ligand>
</feature>
<feature type="binding site" evidence="1">
    <location>
        <position position="14"/>
    </location>
    <ligand>
        <name>ATP</name>
        <dbReference type="ChEBI" id="CHEBI:30616"/>
    </ligand>
</feature>
<feature type="binding site" evidence="1">
    <location>
        <position position="15"/>
    </location>
    <ligand>
        <name>ATP</name>
        <dbReference type="ChEBI" id="CHEBI:30616"/>
    </ligand>
</feature>
<feature type="binding site" evidence="1">
    <location>
        <position position="100"/>
    </location>
    <ligand>
        <name>ATP</name>
        <dbReference type="ChEBI" id="CHEBI:30616"/>
    </ligand>
</feature>
<feature type="binding site" evidence="1">
    <location>
        <position position="138"/>
    </location>
    <ligand>
        <name>ATP</name>
        <dbReference type="ChEBI" id="CHEBI:30616"/>
    </ligand>
</feature>
<dbReference type="EC" id="2.7.4.3" evidence="1"/>
<dbReference type="EMBL" id="AP006878">
    <property type="protein sequence ID" value="BAD84527.1"/>
    <property type="molecule type" value="Genomic_DNA"/>
</dbReference>
<dbReference type="RefSeq" id="WP_011249293.1">
    <property type="nucleotide sequence ID" value="NC_006624.1"/>
</dbReference>
<dbReference type="SMR" id="Q5JG26"/>
<dbReference type="FunCoup" id="Q5JG26">
    <property type="interactions" value="163"/>
</dbReference>
<dbReference type="STRING" id="69014.TK0338"/>
<dbReference type="EnsemblBacteria" id="BAD84527">
    <property type="protein sequence ID" value="BAD84527"/>
    <property type="gene ID" value="TK0338"/>
</dbReference>
<dbReference type="GeneID" id="78446843"/>
<dbReference type="KEGG" id="tko:TK0338"/>
<dbReference type="PATRIC" id="fig|69014.16.peg.335"/>
<dbReference type="eggNOG" id="arCOG01038">
    <property type="taxonomic scope" value="Archaea"/>
</dbReference>
<dbReference type="HOGENOM" id="CLU_079096_0_1_2"/>
<dbReference type="InParanoid" id="Q5JG26"/>
<dbReference type="OrthoDB" id="8730at2157"/>
<dbReference type="PhylomeDB" id="Q5JG26"/>
<dbReference type="Proteomes" id="UP000000536">
    <property type="component" value="Chromosome"/>
</dbReference>
<dbReference type="GO" id="GO:0004017">
    <property type="term" value="F:adenylate kinase activity"/>
    <property type="evidence" value="ECO:0007669"/>
    <property type="project" value="UniProtKB-UniRule"/>
</dbReference>
<dbReference type="GO" id="GO:0005524">
    <property type="term" value="F:ATP binding"/>
    <property type="evidence" value="ECO:0007669"/>
    <property type="project" value="UniProtKB-UniRule"/>
</dbReference>
<dbReference type="GO" id="GO:0016887">
    <property type="term" value="F:ATP hydrolysis activity"/>
    <property type="evidence" value="ECO:0007669"/>
    <property type="project" value="InterPro"/>
</dbReference>
<dbReference type="GO" id="GO:0042274">
    <property type="term" value="P:ribosomal small subunit biogenesis"/>
    <property type="evidence" value="ECO:0007669"/>
    <property type="project" value="UniProtKB-UniRule"/>
</dbReference>
<dbReference type="GO" id="GO:0006364">
    <property type="term" value="P:rRNA processing"/>
    <property type="evidence" value="ECO:0007669"/>
    <property type="project" value="UniProtKB-KW"/>
</dbReference>
<dbReference type="Gene3D" id="3.40.50.300">
    <property type="entry name" value="P-loop containing nucleotide triphosphate hydrolases"/>
    <property type="match status" value="1"/>
</dbReference>
<dbReference type="HAMAP" id="MF_00039">
    <property type="entry name" value="Adenylate_kinase_AK6"/>
    <property type="match status" value="1"/>
</dbReference>
<dbReference type="InterPro" id="IPR020618">
    <property type="entry name" value="Adenyl_kinase_AK6"/>
</dbReference>
<dbReference type="InterPro" id="IPR027417">
    <property type="entry name" value="P-loop_NTPase"/>
</dbReference>
<dbReference type="NCBIfam" id="NF003012">
    <property type="entry name" value="PRK03839.1"/>
    <property type="match status" value="1"/>
</dbReference>
<dbReference type="PANTHER" id="PTHR12595:SF0">
    <property type="entry name" value="ADENYLATE KINASE ISOENZYME 6"/>
    <property type="match status" value="1"/>
</dbReference>
<dbReference type="PANTHER" id="PTHR12595">
    <property type="entry name" value="POS9-ACTIVATING FACTOR FAP7-RELATED"/>
    <property type="match status" value="1"/>
</dbReference>
<dbReference type="Pfam" id="PF13238">
    <property type="entry name" value="AAA_18"/>
    <property type="match status" value="1"/>
</dbReference>
<dbReference type="SUPFAM" id="SSF52540">
    <property type="entry name" value="P-loop containing nucleoside triphosphate hydrolases"/>
    <property type="match status" value="1"/>
</dbReference>
<gene>
    <name type="ordered locus">TK0338</name>
</gene>
<keyword id="KW-0067">ATP-binding</keyword>
<keyword id="KW-0418">Kinase</keyword>
<keyword id="KW-0547">Nucleotide-binding</keyword>
<keyword id="KW-1185">Reference proteome</keyword>
<keyword id="KW-0690">Ribosome biogenesis</keyword>
<keyword id="KW-0698">rRNA processing</keyword>
<keyword id="KW-0808">Transferase</keyword>